<evidence type="ECO:0000255" key="1">
    <source>
        <dbReference type="HAMAP-Rule" id="MF_01659"/>
    </source>
</evidence>
<name>MEND_PROMM</name>
<comment type="function">
    <text evidence="1">Catalyzes the thiamine diphosphate-dependent decarboxylation of 2-oxoglutarate and the subsequent addition of the resulting succinic semialdehyde-thiamine pyrophosphate anion to isochorismate to yield 2-succinyl-5-enolpyruvyl-6-hydroxy-3-cyclohexene-1-carboxylate (SEPHCHC).</text>
</comment>
<comment type="catalytic activity">
    <reaction evidence="1">
        <text>isochorismate + 2-oxoglutarate + H(+) = 5-enolpyruvoyl-6-hydroxy-2-succinyl-cyclohex-3-ene-1-carboxylate + CO2</text>
        <dbReference type="Rhea" id="RHEA:25593"/>
        <dbReference type="ChEBI" id="CHEBI:15378"/>
        <dbReference type="ChEBI" id="CHEBI:16526"/>
        <dbReference type="ChEBI" id="CHEBI:16810"/>
        <dbReference type="ChEBI" id="CHEBI:29780"/>
        <dbReference type="ChEBI" id="CHEBI:58818"/>
        <dbReference type="EC" id="2.2.1.9"/>
    </reaction>
</comment>
<comment type="cofactor">
    <cofactor evidence="1">
        <name>Mg(2+)</name>
        <dbReference type="ChEBI" id="CHEBI:18420"/>
    </cofactor>
    <cofactor evidence="1">
        <name>Mn(2+)</name>
        <dbReference type="ChEBI" id="CHEBI:29035"/>
    </cofactor>
</comment>
<comment type="cofactor">
    <cofactor evidence="1">
        <name>thiamine diphosphate</name>
        <dbReference type="ChEBI" id="CHEBI:58937"/>
    </cofactor>
    <text evidence="1">Binds 1 thiamine pyrophosphate per subunit.</text>
</comment>
<comment type="pathway">
    <text evidence="1">Quinol/quinone metabolism; 1,4-dihydroxy-2-naphthoate biosynthesis; 1,4-dihydroxy-2-naphthoate from chorismate: step 2/7.</text>
</comment>
<comment type="pathway">
    <text evidence="1">Cofactor biosynthesis; phylloquinone biosynthesis.</text>
</comment>
<comment type="subunit">
    <text evidence="1">Homodimer.</text>
</comment>
<comment type="similarity">
    <text evidence="1">Belongs to the TPP enzyme family. MenD subfamily.</text>
</comment>
<proteinExistence type="inferred from homology"/>
<keyword id="KW-0460">Magnesium</keyword>
<keyword id="KW-0464">Manganese</keyword>
<keyword id="KW-0479">Metal-binding</keyword>
<keyword id="KW-1185">Reference proteome</keyword>
<keyword id="KW-0786">Thiamine pyrophosphate</keyword>
<keyword id="KW-0808">Transferase</keyword>
<organism>
    <name type="scientific">Prochlorococcus marinus (strain MIT 9313)</name>
    <dbReference type="NCBI Taxonomy" id="74547"/>
    <lineage>
        <taxon>Bacteria</taxon>
        <taxon>Bacillati</taxon>
        <taxon>Cyanobacteriota</taxon>
        <taxon>Cyanophyceae</taxon>
        <taxon>Synechococcales</taxon>
        <taxon>Prochlorococcaceae</taxon>
        <taxon>Prochlorococcus</taxon>
    </lineage>
</organism>
<sequence length="582" mass="63528">MGLRHLVLCPGSRSGPLALAAGGMARTNRLRLSTAIDERSAAFLALGFSTATGTAAAVVTTSGTAVANLLPAAVEADRSCQPLLLLTADRPYRLKDCGANQTVNQETFLSPACRWIGQGPREGLHLFSKETLESFAEKAWQRAHHPAGAVHLNLPFEEPLHLSEEEQRMIWKGWSPKIPRSSPIKPINLAMAAEGTNGVTDQAPFALDPLRPGVVIAGAWRGLSKDLFAFQQSLREWQALSGWPVLADPLSALPSDQPGLIRSWELLLATGLLGSQEQLQVLRLGPMSASRSLEAWLKSFGDGQLLITEGDSRCLDPLGLSVQWNHGLTSWWQHHHHRWIDADAASQQATKALLRKWQISDRFAQEWLDQQLPLQGAITEPALARWLSRLLPTELPIMLAASSPVRDWLAYADKSLFSRRCFSFRGASGIDGTLSLSMGLAMALGPTLLVSGDLALLHDSNGWLLAHPQRPPLVVVLIDNGGGGIFEQLLVKTAPSEAFEQLFAMPQEVDPLALAGAHNIPHRQVACLEDLPAALEWGLFQAGPVLIRVCTHRRQDSSMRQQLREGLMMHLQSISQNGHIDL</sequence>
<gene>
    <name evidence="1" type="primary">menD</name>
    <name type="ordered locus">PMT_0406</name>
</gene>
<dbReference type="EC" id="2.2.1.9" evidence="1"/>
<dbReference type="EMBL" id="BX548175">
    <property type="protein sequence ID" value="CAE20581.1"/>
    <property type="molecule type" value="Genomic_DNA"/>
</dbReference>
<dbReference type="SMR" id="Q7V8E7"/>
<dbReference type="KEGG" id="pmt:PMT_0406"/>
<dbReference type="eggNOG" id="COG1165">
    <property type="taxonomic scope" value="Bacteria"/>
</dbReference>
<dbReference type="HOGENOM" id="CLU_006051_4_0_3"/>
<dbReference type="UniPathway" id="UPA00995"/>
<dbReference type="UniPathway" id="UPA01057">
    <property type="reaction ID" value="UER00164"/>
</dbReference>
<dbReference type="Proteomes" id="UP000001423">
    <property type="component" value="Chromosome"/>
</dbReference>
<dbReference type="GO" id="GO:0070204">
    <property type="term" value="F:2-succinyl-5-enolpyruvyl-6-hydroxy-3-cyclohexene-1-carboxylic-acid synthase activity"/>
    <property type="evidence" value="ECO:0007669"/>
    <property type="project" value="UniProtKB-UniRule"/>
</dbReference>
<dbReference type="GO" id="GO:0000287">
    <property type="term" value="F:magnesium ion binding"/>
    <property type="evidence" value="ECO:0007669"/>
    <property type="project" value="UniProtKB-UniRule"/>
</dbReference>
<dbReference type="GO" id="GO:0030145">
    <property type="term" value="F:manganese ion binding"/>
    <property type="evidence" value="ECO:0007669"/>
    <property type="project" value="UniProtKB-UniRule"/>
</dbReference>
<dbReference type="GO" id="GO:0030976">
    <property type="term" value="F:thiamine pyrophosphate binding"/>
    <property type="evidence" value="ECO:0007669"/>
    <property type="project" value="UniProtKB-UniRule"/>
</dbReference>
<dbReference type="GO" id="GO:0009234">
    <property type="term" value="P:menaquinone biosynthetic process"/>
    <property type="evidence" value="ECO:0007669"/>
    <property type="project" value="InterPro"/>
</dbReference>
<dbReference type="GO" id="GO:0042372">
    <property type="term" value="P:phylloquinone biosynthetic process"/>
    <property type="evidence" value="ECO:0007669"/>
    <property type="project" value="UniProtKB-UniRule"/>
</dbReference>
<dbReference type="CDD" id="cd07037">
    <property type="entry name" value="TPP_PYR_MenD"/>
    <property type="match status" value="1"/>
</dbReference>
<dbReference type="CDD" id="cd02009">
    <property type="entry name" value="TPP_SHCHC_synthase"/>
    <property type="match status" value="1"/>
</dbReference>
<dbReference type="Gene3D" id="3.40.50.970">
    <property type="match status" value="2"/>
</dbReference>
<dbReference type="Gene3D" id="3.40.50.1220">
    <property type="entry name" value="TPP-binding domain"/>
    <property type="match status" value="1"/>
</dbReference>
<dbReference type="HAMAP" id="MF_01659">
    <property type="entry name" value="MenD"/>
    <property type="match status" value="1"/>
</dbReference>
<dbReference type="InterPro" id="IPR004433">
    <property type="entry name" value="MenaQ_synth_MenD"/>
</dbReference>
<dbReference type="InterPro" id="IPR029061">
    <property type="entry name" value="THDP-binding"/>
</dbReference>
<dbReference type="InterPro" id="IPR012001">
    <property type="entry name" value="Thiamin_PyroP_enz_TPP-bd_dom"/>
</dbReference>
<dbReference type="InterPro" id="IPR011766">
    <property type="entry name" value="TPP_enzyme_TPP-bd"/>
</dbReference>
<dbReference type="NCBIfam" id="TIGR00173">
    <property type="entry name" value="menD"/>
    <property type="match status" value="1"/>
</dbReference>
<dbReference type="PANTHER" id="PTHR42916">
    <property type="entry name" value="2-SUCCINYL-5-ENOLPYRUVYL-6-HYDROXY-3-CYCLOHEXENE-1-CARBOXYLATE SYNTHASE"/>
    <property type="match status" value="1"/>
</dbReference>
<dbReference type="PANTHER" id="PTHR42916:SF1">
    <property type="entry name" value="PROTEIN PHYLLO, CHLOROPLASTIC"/>
    <property type="match status" value="1"/>
</dbReference>
<dbReference type="Pfam" id="PF02775">
    <property type="entry name" value="TPP_enzyme_C"/>
    <property type="match status" value="1"/>
</dbReference>
<dbReference type="Pfam" id="PF02776">
    <property type="entry name" value="TPP_enzyme_N"/>
    <property type="match status" value="1"/>
</dbReference>
<dbReference type="PIRSF" id="PIRSF004983">
    <property type="entry name" value="MenD"/>
    <property type="match status" value="1"/>
</dbReference>
<dbReference type="SUPFAM" id="SSF52518">
    <property type="entry name" value="Thiamin diphosphate-binding fold (THDP-binding)"/>
    <property type="match status" value="2"/>
</dbReference>
<feature type="chain" id="PRO_0000341804" description="2-succinyl-5-enolpyruvyl-6-hydroxy-3-cyclohexene-1-carboxylate synthase">
    <location>
        <begin position="1"/>
        <end position="582"/>
    </location>
</feature>
<reference key="1">
    <citation type="journal article" date="2003" name="Nature">
        <title>Genome divergence in two Prochlorococcus ecotypes reflects oceanic niche differentiation.</title>
        <authorList>
            <person name="Rocap G."/>
            <person name="Larimer F.W."/>
            <person name="Lamerdin J.E."/>
            <person name="Malfatti S."/>
            <person name="Chain P."/>
            <person name="Ahlgren N.A."/>
            <person name="Arellano A."/>
            <person name="Coleman M."/>
            <person name="Hauser L."/>
            <person name="Hess W.R."/>
            <person name="Johnson Z.I."/>
            <person name="Land M.L."/>
            <person name="Lindell D."/>
            <person name="Post A.F."/>
            <person name="Regala W."/>
            <person name="Shah M."/>
            <person name="Shaw S.L."/>
            <person name="Steglich C."/>
            <person name="Sullivan M.B."/>
            <person name="Ting C.S."/>
            <person name="Tolonen A."/>
            <person name="Webb E.A."/>
            <person name="Zinser E.R."/>
            <person name="Chisholm S.W."/>
        </authorList>
    </citation>
    <scope>NUCLEOTIDE SEQUENCE [LARGE SCALE GENOMIC DNA]</scope>
    <source>
        <strain>MIT 9313</strain>
    </source>
</reference>
<accession>Q7V8E7</accession>
<protein>
    <recommendedName>
        <fullName evidence="1">2-succinyl-5-enolpyruvyl-6-hydroxy-3-cyclohexene-1-carboxylate synthase</fullName>
        <shortName evidence="1">SEPHCHC synthase</shortName>
        <ecNumber evidence="1">2.2.1.9</ecNumber>
    </recommendedName>
</protein>